<organism>
    <name type="scientific">Bos taurus</name>
    <name type="common">Bovine</name>
    <dbReference type="NCBI Taxonomy" id="9913"/>
    <lineage>
        <taxon>Eukaryota</taxon>
        <taxon>Metazoa</taxon>
        <taxon>Chordata</taxon>
        <taxon>Craniata</taxon>
        <taxon>Vertebrata</taxon>
        <taxon>Euteleostomi</taxon>
        <taxon>Mammalia</taxon>
        <taxon>Eutheria</taxon>
        <taxon>Laurasiatheria</taxon>
        <taxon>Artiodactyla</taxon>
        <taxon>Ruminantia</taxon>
        <taxon>Pecora</taxon>
        <taxon>Bovidae</taxon>
        <taxon>Bovinae</taxon>
        <taxon>Bos</taxon>
    </lineage>
</organism>
<gene>
    <name type="primary">MCRIP1</name>
    <name type="synonym">FAM195B</name>
</gene>
<comment type="function">
    <text evidence="1">The phosphorylation status of MCRIP1 functions as a molecular switch to regulate epithelial-mesenchymal transition. Unphosphorylated MCRIP1 binds to and inhibits the transcriptional corepressor CTBP(s). When phosphorylated by MAPK/ERK, MCRIP1 releases CTBP(s) resulting in transcriptional silencing of the E-cadherin gene and induction of epithelial-mesenchymal transition.</text>
</comment>
<comment type="subunit">
    <text evidence="1">Interacts (unphosphorylated form, via the PXDLS motif) with CTBP1, competitively inhibiting CTBP-ZEB1 interaction. Interacts with CTBP2. Interacts with MCRIP2 (By similarity). Interacts with DDX6 (By similarity).</text>
</comment>
<comment type="subcellular location">
    <subcellularLocation>
        <location evidence="1">Nucleus</location>
    </subcellularLocation>
    <subcellularLocation>
        <location evidence="1">Cytoplasm</location>
        <location evidence="1">Stress granule</location>
    </subcellularLocation>
</comment>
<comment type="PTM">
    <text evidence="1">Phosphorylation by MAPK3/1 (ERK1/2) regulates MCRIP1 binding to CTBP(s).</text>
</comment>
<comment type="similarity">
    <text evidence="4">Belongs to the MCRIP family.</text>
</comment>
<proteinExistence type="inferred from homology"/>
<accession>A8E4M4</accession>
<dbReference type="EMBL" id="BC149379">
    <property type="protein sequence ID" value="AAI49380.1"/>
    <property type="molecule type" value="mRNA"/>
</dbReference>
<dbReference type="RefSeq" id="NP_001103264.1">
    <property type="nucleotide sequence ID" value="NM_001109794.2"/>
</dbReference>
<dbReference type="FunCoup" id="A8E4M4">
    <property type="interactions" value="894"/>
</dbReference>
<dbReference type="STRING" id="9913.ENSBTAP00000066850"/>
<dbReference type="PaxDb" id="9913-ENSBTAP00000049295"/>
<dbReference type="GeneID" id="512391"/>
<dbReference type="KEGG" id="bta:512391"/>
<dbReference type="CTD" id="348262"/>
<dbReference type="eggNOG" id="ENOG502S25D">
    <property type="taxonomic scope" value="Eukaryota"/>
</dbReference>
<dbReference type="InParanoid" id="A8E4M4"/>
<dbReference type="OrthoDB" id="8170061at2759"/>
<dbReference type="Proteomes" id="UP000009136">
    <property type="component" value="Unplaced"/>
</dbReference>
<dbReference type="GO" id="GO:0005737">
    <property type="term" value="C:cytoplasm"/>
    <property type="evidence" value="ECO:0000250"/>
    <property type="project" value="UniProtKB"/>
</dbReference>
<dbReference type="GO" id="GO:0010494">
    <property type="term" value="C:cytoplasmic stress granule"/>
    <property type="evidence" value="ECO:0000250"/>
    <property type="project" value="UniProtKB"/>
</dbReference>
<dbReference type="GO" id="GO:0005634">
    <property type="term" value="C:nucleus"/>
    <property type="evidence" value="ECO:0000250"/>
    <property type="project" value="UniProtKB"/>
</dbReference>
<dbReference type="GO" id="GO:0010717">
    <property type="term" value="P:regulation of epithelial to mesenchymal transition"/>
    <property type="evidence" value="ECO:0000250"/>
    <property type="project" value="UniProtKB"/>
</dbReference>
<dbReference type="InterPro" id="IPR029428">
    <property type="entry name" value="MCRIP"/>
</dbReference>
<dbReference type="Pfam" id="PF14799">
    <property type="entry name" value="FAM195"/>
    <property type="match status" value="1"/>
</dbReference>
<reference key="1">
    <citation type="submission" date="2007-07" db="EMBL/GenBank/DDBJ databases">
        <authorList>
            <consortium name="NIH - Mammalian Gene Collection (MGC) project"/>
        </authorList>
    </citation>
    <scope>NUCLEOTIDE SEQUENCE [LARGE SCALE MRNA]</scope>
</reference>
<sequence>MTSSPVSRVVYNGKRNSSHRSPPNSSEIFTPAHEENVRFIYEAWQGVERDLRSQMSGSERGLVEEYVEKVPNPSLKTFRPIDLSDLKRRNTQDAKKS</sequence>
<evidence type="ECO:0000250" key="1">
    <source>
        <dbReference type="UniProtKB" id="C9JLW8"/>
    </source>
</evidence>
<evidence type="ECO:0000250" key="2">
    <source>
        <dbReference type="UniProtKB" id="Q3UGS4"/>
    </source>
</evidence>
<evidence type="ECO:0000256" key="3">
    <source>
        <dbReference type="SAM" id="MobiDB-lite"/>
    </source>
</evidence>
<evidence type="ECO:0000305" key="4"/>
<feature type="chain" id="PRO_0000393953" description="Mapk-regulated corepressor-interacting protein 1">
    <location>
        <begin position="1"/>
        <end position="97"/>
    </location>
</feature>
<feature type="region of interest" description="Disordered" evidence="3">
    <location>
        <begin position="1"/>
        <end position="30"/>
    </location>
</feature>
<feature type="region of interest" description="Disordered" evidence="3">
    <location>
        <begin position="77"/>
        <end position="97"/>
    </location>
</feature>
<feature type="short sequence motif" description="PXDLS motif" evidence="4">
    <location>
        <begin position="80"/>
        <end position="84"/>
    </location>
</feature>
<feature type="compositionally biased region" description="Basic and acidic residues" evidence="3">
    <location>
        <begin position="82"/>
        <end position="97"/>
    </location>
</feature>
<feature type="modified residue" description="Phosphoserine" evidence="1">
    <location>
        <position position="21"/>
    </location>
</feature>
<feature type="modified residue" description="Phosphothreonine" evidence="1">
    <location>
        <position position="30"/>
    </location>
</feature>
<feature type="modified residue" description="Phosphotyrosine" evidence="2">
    <location>
        <position position="41"/>
    </location>
</feature>
<keyword id="KW-0963">Cytoplasm</keyword>
<keyword id="KW-0539">Nucleus</keyword>
<keyword id="KW-0597">Phosphoprotein</keyword>
<keyword id="KW-1185">Reference proteome</keyword>
<protein>
    <recommendedName>
        <fullName>Mapk-regulated corepressor-interacting protein 1</fullName>
    </recommendedName>
    <alternativeName>
        <fullName>Protein FAM195B</fullName>
    </alternativeName>
</protein>
<name>MCRI1_BOVIN</name>